<gene>
    <name evidence="1" type="primary">iscR</name>
    <name type="ordered locus">ESA_00720</name>
</gene>
<reference key="1">
    <citation type="journal article" date="2010" name="PLoS ONE">
        <title>Genome sequence of Cronobacter sakazakii BAA-894 and comparative genomic hybridization analysis with other Cronobacter species.</title>
        <authorList>
            <person name="Kucerova E."/>
            <person name="Clifton S.W."/>
            <person name="Xia X.Q."/>
            <person name="Long F."/>
            <person name="Porwollik S."/>
            <person name="Fulton L."/>
            <person name="Fronick C."/>
            <person name="Minx P."/>
            <person name="Kyung K."/>
            <person name="Warren W."/>
            <person name="Fulton R."/>
            <person name="Feng D."/>
            <person name="Wollam A."/>
            <person name="Shah N."/>
            <person name="Bhonagiri V."/>
            <person name="Nash W.E."/>
            <person name="Hallsworth-Pepin K."/>
            <person name="Wilson R.K."/>
            <person name="McClelland M."/>
            <person name="Forsythe S.J."/>
        </authorList>
    </citation>
    <scope>NUCLEOTIDE SEQUENCE [LARGE SCALE GENOMIC DNA]</scope>
    <source>
        <strain>ATCC BAA-894</strain>
    </source>
</reference>
<protein>
    <recommendedName>
        <fullName evidence="1">HTH-type transcriptional regulator IscR</fullName>
    </recommendedName>
</protein>
<evidence type="ECO:0000255" key="1">
    <source>
        <dbReference type="HAMAP-Rule" id="MF_01176"/>
    </source>
</evidence>
<evidence type="ECO:0000256" key="2">
    <source>
        <dbReference type="SAM" id="MobiDB-lite"/>
    </source>
</evidence>
<keyword id="KW-0001">2Fe-2S</keyword>
<keyword id="KW-0010">Activator</keyword>
<keyword id="KW-0238">DNA-binding</keyword>
<keyword id="KW-0408">Iron</keyword>
<keyword id="KW-0411">Iron-sulfur</keyword>
<keyword id="KW-0479">Metal-binding</keyword>
<keyword id="KW-1185">Reference proteome</keyword>
<keyword id="KW-0678">Repressor</keyword>
<keyword id="KW-0804">Transcription</keyword>
<keyword id="KW-0805">Transcription regulation</keyword>
<dbReference type="EMBL" id="CP000783">
    <property type="protein sequence ID" value="ABU75997.1"/>
    <property type="molecule type" value="Genomic_DNA"/>
</dbReference>
<dbReference type="RefSeq" id="WP_004385924.1">
    <property type="nucleotide sequence ID" value="NC_009778.1"/>
</dbReference>
<dbReference type="SMR" id="A7MGX6"/>
<dbReference type="GeneID" id="56729608"/>
<dbReference type="KEGG" id="esa:ESA_00720"/>
<dbReference type="HOGENOM" id="CLU_107144_0_0_6"/>
<dbReference type="Proteomes" id="UP000000260">
    <property type="component" value="Chromosome"/>
</dbReference>
<dbReference type="GO" id="GO:0005829">
    <property type="term" value="C:cytosol"/>
    <property type="evidence" value="ECO:0007669"/>
    <property type="project" value="TreeGrafter"/>
</dbReference>
<dbReference type="GO" id="GO:0051537">
    <property type="term" value="F:2 iron, 2 sulfur cluster binding"/>
    <property type="evidence" value="ECO:0007669"/>
    <property type="project" value="UniProtKB-KW"/>
</dbReference>
<dbReference type="GO" id="GO:0003700">
    <property type="term" value="F:DNA-binding transcription factor activity"/>
    <property type="evidence" value="ECO:0007669"/>
    <property type="project" value="UniProtKB-UniRule"/>
</dbReference>
<dbReference type="GO" id="GO:0003690">
    <property type="term" value="F:double-stranded DNA binding"/>
    <property type="evidence" value="ECO:0007669"/>
    <property type="project" value="UniProtKB-UniRule"/>
</dbReference>
<dbReference type="GO" id="GO:0005506">
    <property type="term" value="F:iron ion binding"/>
    <property type="evidence" value="ECO:0007669"/>
    <property type="project" value="UniProtKB-UniRule"/>
</dbReference>
<dbReference type="FunFam" id="1.10.10.10:FF:000026">
    <property type="entry name" value="HTH-type transcriptional regulator IscR"/>
    <property type="match status" value="1"/>
</dbReference>
<dbReference type="Gene3D" id="1.10.10.10">
    <property type="entry name" value="Winged helix-like DNA-binding domain superfamily/Winged helix DNA-binding domain"/>
    <property type="match status" value="1"/>
</dbReference>
<dbReference type="HAMAP" id="MF_01176">
    <property type="entry name" value="HTH_type_IscR"/>
    <property type="match status" value="1"/>
</dbReference>
<dbReference type="InterPro" id="IPR010242">
    <property type="entry name" value="TF_HTH_IscR"/>
</dbReference>
<dbReference type="InterPro" id="IPR030489">
    <property type="entry name" value="TR_Rrf2-type_CS"/>
</dbReference>
<dbReference type="InterPro" id="IPR000944">
    <property type="entry name" value="Tscrpt_reg_Rrf2"/>
</dbReference>
<dbReference type="InterPro" id="IPR036388">
    <property type="entry name" value="WH-like_DNA-bd_sf"/>
</dbReference>
<dbReference type="InterPro" id="IPR036390">
    <property type="entry name" value="WH_DNA-bd_sf"/>
</dbReference>
<dbReference type="NCBIfam" id="TIGR02010">
    <property type="entry name" value="IscR"/>
    <property type="match status" value="1"/>
</dbReference>
<dbReference type="NCBIfam" id="NF008110">
    <property type="entry name" value="PRK10857.1"/>
    <property type="match status" value="1"/>
</dbReference>
<dbReference type="NCBIfam" id="TIGR00738">
    <property type="entry name" value="rrf2_super"/>
    <property type="match status" value="1"/>
</dbReference>
<dbReference type="PANTHER" id="PTHR33221:SF5">
    <property type="entry name" value="HTH-TYPE TRANSCRIPTIONAL REGULATOR ISCR"/>
    <property type="match status" value="1"/>
</dbReference>
<dbReference type="PANTHER" id="PTHR33221">
    <property type="entry name" value="WINGED HELIX-TURN-HELIX TRANSCRIPTIONAL REGULATOR, RRF2 FAMILY"/>
    <property type="match status" value="1"/>
</dbReference>
<dbReference type="Pfam" id="PF02082">
    <property type="entry name" value="Rrf2"/>
    <property type="match status" value="1"/>
</dbReference>
<dbReference type="SUPFAM" id="SSF46785">
    <property type="entry name" value="Winged helix' DNA-binding domain"/>
    <property type="match status" value="1"/>
</dbReference>
<dbReference type="PROSITE" id="PS01332">
    <property type="entry name" value="HTH_RRF2_1"/>
    <property type="match status" value="1"/>
</dbReference>
<dbReference type="PROSITE" id="PS51197">
    <property type="entry name" value="HTH_RRF2_2"/>
    <property type="match status" value="1"/>
</dbReference>
<comment type="function">
    <text evidence="1">Regulates the transcription of several operons and genes involved in the biogenesis of Fe-S clusters and Fe-S-containing proteins.</text>
</comment>
<comment type="cofactor">
    <cofactor evidence="1">
        <name>[2Fe-2S] cluster</name>
        <dbReference type="ChEBI" id="CHEBI:190135"/>
    </cofactor>
    <text evidence="1">Binds 1 [2Fe-2S] cluster.</text>
</comment>
<organism>
    <name type="scientific">Cronobacter sakazakii (strain ATCC BAA-894)</name>
    <name type="common">Enterobacter sakazakii</name>
    <dbReference type="NCBI Taxonomy" id="290339"/>
    <lineage>
        <taxon>Bacteria</taxon>
        <taxon>Pseudomonadati</taxon>
        <taxon>Pseudomonadota</taxon>
        <taxon>Gammaproteobacteria</taxon>
        <taxon>Enterobacterales</taxon>
        <taxon>Enterobacteriaceae</taxon>
        <taxon>Cronobacter</taxon>
    </lineage>
</organism>
<sequence length="162" mass="17403">MRLTSKGRYAVTAMLDVALNSESGPVPLADISERQGISLSYLEQLFSRLRKNGLVASVRGPGGGYLLGKDAGQIAVGEVISAVDESVDATRCQGKGGCQGGDKCLTHALWRDLSDRLTGFLNNITLGELVNNQEVLDVSDRQHNEAHRPTRAQDAIDVKLRA</sequence>
<proteinExistence type="inferred from homology"/>
<accession>A7MGX6</accession>
<name>ISCR_CROS8</name>
<feature type="chain" id="PRO_1000085420" description="HTH-type transcriptional regulator IscR">
    <location>
        <begin position="1"/>
        <end position="162"/>
    </location>
</feature>
<feature type="domain" description="HTH rrf2-type" evidence="1">
    <location>
        <begin position="2"/>
        <end position="131"/>
    </location>
</feature>
<feature type="DNA-binding region" description="H-T-H motif" evidence="1">
    <location>
        <begin position="28"/>
        <end position="51"/>
    </location>
</feature>
<feature type="region of interest" description="Disordered" evidence="2">
    <location>
        <begin position="141"/>
        <end position="162"/>
    </location>
</feature>
<feature type="binding site" evidence="1">
    <location>
        <position position="92"/>
    </location>
    <ligand>
        <name>[2Fe-2S] cluster</name>
        <dbReference type="ChEBI" id="CHEBI:190135"/>
    </ligand>
</feature>
<feature type="binding site" evidence="1">
    <location>
        <position position="98"/>
    </location>
    <ligand>
        <name>[2Fe-2S] cluster</name>
        <dbReference type="ChEBI" id="CHEBI:190135"/>
    </ligand>
</feature>
<feature type="binding site" evidence="1">
    <location>
        <position position="104"/>
    </location>
    <ligand>
        <name>[2Fe-2S] cluster</name>
        <dbReference type="ChEBI" id="CHEBI:190135"/>
    </ligand>
</feature>